<sequence>MKIYIQPLSVNSHTVEVLANSLPKIFNAEVFVLPASDVSLKCYNASRRQYNSTCILRMLPPIKVTLGVTGKDIYAKGMNFVFGEAELGGARAVLSVFRLTTADSELYRERVVKEAVHEIGHVLGLKHCSNNCVMRFSNSVQDVDRKPVSFCRECASKIRY</sequence>
<proteinExistence type="evidence at protein level"/>
<dbReference type="EC" id="3.4.-.-" evidence="1"/>
<dbReference type="EMBL" id="AE000782">
    <property type="protein sequence ID" value="AAB90906.1"/>
    <property type="molecule type" value="Genomic_DNA"/>
</dbReference>
<dbReference type="PIR" id="B69291">
    <property type="entry name" value="B69291"/>
</dbReference>
<dbReference type="RefSeq" id="WP_010877837.1">
    <property type="nucleotide sequence ID" value="NC_000917.1"/>
</dbReference>
<dbReference type="PDB" id="3ZVS">
    <property type="method" value="X-ray"/>
    <property type="resolution" value="1.40 A"/>
    <property type="chains" value="A/B/C=1-160"/>
</dbReference>
<dbReference type="PDB" id="4A3W">
    <property type="method" value="X-ray"/>
    <property type="resolution" value="2.16 A"/>
    <property type="chains" value="A=1-160"/>
</dbReference>
<dbReference type="PDB" id="4AXQ">
    <property type="method" value="X-ray"/>
    <property type="resolution" value="1.45 A"/>
    <property type="chains" value="A=1-160"/>
</dbReference>
<dbReference type="PDBsum" id="3ZVS"/>
<dbReference type="PDBsum" id="4A3W"/>
<dbReference type="PDBsum" id="4AXQ"/>
<dbReference type="SMR" id="O29917"/>
<dbReference type="STRING" id="224325.AF_0330"/>
<dbReference type="PaxDb" id="224325-AF_0330"/>
<dbReference type="EnsemblBacteria" id="AAB90906">
    <property type="protein sequence ID" value="AAB90906"/>
    <property type="gene ID" value="AF_0330"/>
</dbReference>
<dbReference type="GeneID" id="24793869"/>
<dbReference type="KEGG" id="afu:AF_0330"/>
<dbReference type="eggNOG" id="arCOG00458">
    <property type="taxonomic scope" value="Archaea"/>
</dbReference>
<dbReference type="HOGENOM" id="CLU_108521_2_0_2"/>
<dbReference type="OrthoDB" id="50281at2157"/>
<dbReference type="PhylomeDB" id="O29917"/>
<dbReference type="EvolutionaryTrace" id="O29917"/>
<dbReference type="Proteomes" id="UP000002199">
    <property type="component" value="Chromosome"/>
</dbReference>
<dbReference type="GO" id="GO:0008237">
    <property type="term" value="F:metallopeptidase activity"/>
    <property type="evidence" value="ECO:0007669"/>
    <property type="project" value="UniProtKB-UniRule"/>
</dbReference>
<dbReference type="GO" id="GO:0008270">
    <property type="term" value="F:zinc ion binding"/>
    <property type="evidence" value="ECO:0000314"/>
    <property type="project" value="UniProtKB"/>
</dbReference>
<dbReference type="GO" id="GO:0006508">
    <property type="term" value="P:proteolysis"/>
    <property type="evidence" value="ECO:0007669"/>
    <property type="project" value="UniProtKB-UniRule"/>
</dbReference>
<dbReference type="CDD" id="cd11375">
    <property type="entry name" value="Peptidase_M54"/>
    <property type="match status" value="1"/>
</dbReference>
<dbReference type="FunFam" id="3.40.390.10:FF:000124">
    <property type="entry name" value="Archaemetzincin"/>
    <property type="match status" value="1"/>
</dbReference>
<dbReference type="Gene3D" id="3.40.390.10">
    <property type="entry name" value="Collagenase (Catalytic Domain)"/>
    <property type="match status" value="1"/>
</dbReference>
<dbReference type="HAMAP" id="MF_01842">
    <property type="entry name" value="Archaemetzincin"/>
    <property type="match status" value="1"/>
</dbReference>
<dbReference type="InterPro" id="IPR024079">
    <property type="entry name" value="MetalloPept_cat_dom_sf"/>
</dbReference>
<dbReference type="InterPro" id="IPR012962">
    <property type="entry name" value="Pept_M54_archaemetzincn"/>
</dbReference>
<dbReference type="InterPro" id="IPR012091">
    <property type="entry name" value="Pept_M54_archaemetzncn_arc/bac"/>
</dbReference>
<dbReference type="NCBIfam" id="NF033823">
    <property type="entry name" value="archmetzin"/>
    <property type="match status" value="1"/>
</dbReference>
<dbReference type="PANTHER" id="PTHR15910">
    <property type="entry name" value="ARCHAEMETZINCIN"/>
    <property type="match status" value="1"/>
</dbReference>
<dbReference type="PANTHER" id="PTHR15910:SF1">
    <property type="entry name" value="ARCHAEMETZINCIN-2"/>
    <property type="match status" value="1"/>
</dbReference>
<dbReference type="Pfam" id="PF07998">
    <property type="entry name" value="Peptidase_M54"/>
    <property type="match status" value="1"/>
</dbReference>
<dbReference type="PIRSF" id="PIRSF005785">
    <property type="entry name" value="Zn-prot_arch"/>
    <property type="match status" value="1"/>
</dbReference>
<dbReference type="SUPFAM" id="SSF55486">
    <property type="entry name" value="Metalloproteases ('zincins'), catalytic domain"/>
    <property type="match status" value="1"/>
</dbReference>
<comment type="function">
    <text evidence="1">Probable zinc metalloprotease whose natural substrate is unknown.</text>
</comment>
<comment type="cofactor">
    <cofactor evidence="1 2">
        <name>Zn(2+)</name>
        <dbReference type="ChEBI" id="CHEBI:29105"/>
    </cofactor>
    <text evidence="1 2">Binds 2 Zn(2+) ions per subunit. One is catalytic, whereas the other seems to have a structural role.</text>
</comment>
<comment type="subunit">
    <text evidence="1 2">Monomer.</text>
</comment>
<comment type="similarity">
    <text evidence="1">Belongs to the peptidase M54 family.</text>
</comment>
<feature type="chain" id="PRO_0000159623" description="Archaemetzincin">
    <location>
        <begin position="1"/>
        <end position="160"/>
    </location>
</feature>
<feature type="active site" description="Proton acceptor" evidence="3">
    <location>
        <position position="118"/>
    </location>
</feature>
<feature type="binding site">
    <location>
        <position position="117"/>
    </location>
    <ligand>
        <name>Zn(2+)</name>
        <dbReference type="ChEBI" id="CHEBI:29105"/>
        <label>1</label>
        <note>catalytic</note>
    </ligand>
</feature>
<feature type="binding site">
    <location>
        <position position="121"/>
    </location>
    <ligand>
        <name>Zn(2+)</name>
        <dbReference type="ChEBI" id="CHEBI:29105"/>
        <label>1</label>
        <note>catalytic</note>
    </ligand>
</feature>
<feature type="binding site">
    <location>
        <position position="127"/>
    </location>
    <ligand>
        <name>Zn(2+)</name>
        <dbReference type="ChEBI" id="CHEBI:29105"/>
        <label>1</label>
        <note>catalytic</note>
    </ligand>
</feature>
<feature type="binding site">
    <location>
        <position position="128"/>
    </location>
    <ligand>
        <name>Zn(2+)</name>
        <dbReference type="ChEBI" id="CHEBI:29105"/>
        <label>2</label>
    </ligand>
</feature>
<feature type="binding site">
    <location>
        <position position="132"/>
    </location>
    <ligand>
        <name>Zn(2+)</name>
        <dbReference type="ChEBI" id="CHEBI:29105"/>
        <label>2</label>
    </ligand>
</feature>
<feature type="binding site">
    <location>
        <position position="151"/>
    </location>
    <ligand>
        <name>Zn(2+)</name>
        <dbReference type="ChEBI" id="CHEBI:29105"/>
        <label>2</label>
    </ligand>
</feature>
<feature type="binding site">
    <location>
        <position position="154"/>
    </location>
    <ligand>
        <name>Zn(2+)</name>
        <dbReference type="ChEBI" id="CHEBI:29105"/>
        <label>2</label>
    </ligand>
</feature>
<feature type="strand" evidence="4">
    <location>
        <begin position="2"/>
        <end position="9"/>
    </location>
</feature>
<feature type="helix" evidence="4">
    <location>
        <begin position="12"/>
        <end position="26"/>
    </location>
</feature>
<feature type="strand" evidence="4">
    <location>
        <begin position="29"/>
        <end position="32"/>
    </location>
</feature>
<feature type="helix" evidence="4">
    <location>
        <begin position="40"/>
        <end position="42"/>
    </location>
</feature>
<feature type="turn" evidence="4">
    <location>
        <begin position="45"/>
        <end position="48"/>
    </location>
</feature>
<feature type="strand" evidence="4">
    <location>
        <begin position="49"/>
        <end position="51"/>
    </location>
</feature>
<feature type="helix" evidence="4">
    <location>
        <begin position="52"/>
        <end position="58"/>
    </location>
</feature>
<feature type="strand" evidence="4">
    <location>
        <begin position="63"/>
        <end position="71"/>
    </location>
</feature>
<feature type="strand" evidence="4">
    <location>
        <begin position="81"/>
        <end position="85"/>
    </location>
</feature>
<feature type="strand" evidence="4">
    <location>
        <begin position="89"/>
        <end position="95"/>
    </location>
</feature>
<feature type="helix" evidence="4">
    <location>
        <begin position="97"/>
        <end position="99"/>
    </location>
</feature>
<feature type="helix" evidence="4">
    <location>
        <begin position="104"/>
        <end position="122"/>
    </location>
</feature>
<feature type="strand" evidence="4">
    <location>
        <begin position="130"/>
        <end position="132"/>
    </location>
</feature>
<feature type="helix" evidence="4">
    <location>
        <begin position="140"/>
        <end position="145"/>
    </location>
</feature>
<feature type="helix" evidence="4">
    <location>
        <begin position="152"/>
        <end position="157"/>
    </location>
</feature>
<reference key="1">
    <citation type="journal article" date="1997" name="Nature">
        <title>The complete genome sequence of the hyperthermophilic, sulphate-reducing archaeon Archaeoglobus fulgidus.</title>
        <authorList>
            <person name="Klenk H.-P."/>
            <person name="Clayton R.A."/>
            <person name="Tomb J.-F."/>
            <person name="White O."/>
            <person name="Nelson K.E."/>
            <person name="Ketchum K.A."/>
            <person name="Dodson R.J."/>
            <person name="Gwinn M.L."/>
            <person name="Hickey E.K."/>
            <person name="Peterson J.D."/>
            <person name="Richardson D.L."/>
            <person name="Kerlavage A.R."/>
            <person name="Graham D.E."/>
            <person name="Kyrpides N.C."/>
            <person name="Fleischmann R.D."/>
            <person name="Quackenbush J."/>
            <person name="Lee N.H."/>
            <person name="Sutton G.G."/>
            <person name="Gill S.R."/>
            <person name="Kirkness E.F."/>
            <person name="Dougherty B.A."/>
            <person name="McKenney K."/>
            <person name="Adams M.D."/>
            <person name="Loftus B.J."/>
            <person name="Peterson S.N."/>
            <person name="Reich C.I."/>
            <person name="McNeil L.K."/>
            <person name="Badger J.H."/>
            <person name="Glodek A."/>
            <person name="Zhou L."/>
            <person name="Overbeek R."/>
            <person name="Gocayne J.D."/>
            <person name="Weidman J.F."/>
            <person name="McDonald L.A."/>
            <person name="Utterback T.R."/>
            <person name="Cotton M.D."/>
            <person name="Spriggs T."/>
            <person name="Artiach P."/>
            <person name="Kaine B.P."/>
            <person name="Sykes S.M."/>
            <person name="Sadow P.W."/>
            <person name="D'Andrea K.P."/>
            <person name="Bowman C."/>
            <person name="Fujii C."/>
            <person name="Garland S.A."/>
            <person name="Mason T.M."/>
            <person name="Olsen G.J."/>
            <person name="Fraser C.M."/>
            <person name="Smith H.O."/>
            <person name="Woese C.R."/>
            <person name="Venter J.C."/>
        </authorList>
    </citation>
    <scope>NUCLEOTIDE SEQUENCE [LARGE SCALE GENOMIC DNA]</scope>
    <source>
        <strain>ATCC 49558 / DSM 4304 / JCM 9628 / NBRC 100126 / VC-16</strain>
    </source>
</reference>
<reference key="2">
    <citation type="journal article" date="2012" name="PLoS ONE">
        <title>Crystal structures of archaemetzincin reveal a moldable substrate-binding site.</title>
        <authorList>
            <person name="Graef C."/>
            <person name="Schacherl M."/>
            <person name="Waltersperger S."/>
            <person name="Baumann U."/>
        </authorList>
    </citation>
    <scope>X-RAY CRYSTALLOGRAPHY (1.4 ANGSTROMS) IN COMPLEXES WITH ZINC</scope>
    <scope>COFACTOR</scope>
    <scope>ACTIVE SITE</scope>
    <scope>SUBUNIT</scope>
    <source>
        <strain>ATCC 49558 / DSM 4304 / JCM 9628 / NBRC 100126 / VC-16</strain>
    </source>
</reference>
<name>AMZA_ARCFU</name>
<organism>
    <name type="scientific">Archaeoglobus fulgidus (strain ATCC 49558 / DSM 4304 / JCM 9628 / NBRC 100126 / VC-16)</name>
    <dbReference type="NCBI Taxonomy" id="224325"/>
    <lineage>
        <taxon>Archaea</taxon>
        <taxon>Methanobacteriati</taxon>
        <taxon>Methanobacteriota</taxon>
        <taxon>Archaeoglobi</taxon>
        <taxon>Archaeoglobales</taxon>
        <taxon>Archaeoglobaceae</taxon>
        <taxon>Archaeoglobus</taxon>
    </lineage>
</organism>
<keyword id="KW-0002">3D-structure</keyword>
<keyword id="KW-0378">Hydrolase</keyword>
<keyword id="KW-0479">Metal-binding</keyword>
<keyword id="KW-0482">Metalloprotease</keyword>
<keyword id="KW-0645">Protease</keyword>
<keyword id="KW-1185">Reference proteome</keyword>
<keyword id="KW-0862">Zinc</keyword>
<evidence type="ECO:0000255" key="1">
    <source>
        <dbReference type="HAMAP-Rule" id="MF_01842"/>
    </source>
</evidence>
<evidence type="ECO:0000269" key="2">
    <source>
    </source>
</evidence>
<evidence type="ECO:0000305" key="3">
    <source>
    </source>
</evidence>
<evidence type="ECO:0007829" key="4">
    <source>
        <dbReference type="PDB" id="3ZVS"/>
    </source>
</evidence>
<gene>
    <name evidence="1" type="primary">amzA</name>
    <name type="ordered locus">AF_0330</name>
</gene>
<protein>
    <recommendedName>
        <fullName evidence="1">Archaemetzincin</fullName>
        <ecNumber evidence="1">3.4.-.-</ecNumber>
    </recommendedName>
</protein>
<accession>O29917</accession>